<gene>
    <name evidence="1" type="primary">ctaA</name>
    <name type="ordered locus">SACOL1124</name>
</gene>
<reference key="1">
    <citation type="journal article" date="2005" name="J. Bacteriol.">
        <title>Insights on evolution of virulence and resistance from the complete genome analysis of an early methicillin-resistant Staphylococcus aureus strain and a biofilm-producing methicillin-resistant Staphylococcus epidermidis strain.</title>
        <authorList>
            <person name="Gill S.R."/>
            <person name="Fouts D.E."/>
            <person name="Archer G.L."/>
            <person name="Mongodin E.F."/>
            <person name="DeBoy R.T."/>
            <person name="Ravel J."/>
            <person name="Paulsen I.T."/>
            <person name="Kolonay J.F."/>
            <person name="Brinkac L.M."/>
            <person name="Beanan M.J."/>
            <person name="Dodson R.J."/>
            <person name="Daugherty S.C."/>
            <person name="Madupu R."/>
            <person name="Angiuoli S.V."/>
            <person name="Durkin A.S."/>
            <person name="Haft D.H."/>
            <person name="Vamathevan J.J."/>
            <person name="Khouri H."/>
            <person name="Utterback T.R."/>
            <person name="Lee C."/>
            <person name="Dimitrov G."/>
            <person name="Jiang L."/>
            <person name="Qin H."/>
            <person name="Weidman J."/>
            <person name="Tran K."/>
            <person name="Kang K.H."/>
            <person name="Hance I.R."/>
            <person name="Nelson K.E."/>
            <person name="Fraser C.M."/>
        </authorList>
    </citation>
    <scope>NUCLEOTIDE SEQUENCE [LARGE SCALE GENOMIC DNA]</scope>
    <source>
        <strain>COL</strain>
    </source>
</reference>
<feature type="chain" id="PRO_0000348988" description="Heme A synthase">
    <location>
        <begin position="1"/>
        <end position="303"/>
    </location>
</feature>
<feature type="topological domain" description="Cytoplasmic" evidence="1">
    <location>
        <begin position="1"/>
        <end position="8"/>
    </location>
</feature>
<feature type="transmembrane region" description="Helical" evidence="1">
    <location>
        <begin position="9"/>
        <end position="29"/>
    </location>
</feature>
<feature type="topological domain" description="Extracellular" evidence="1">
    <location>
        <begin position="30"/>
        <end position="67"/>
    </location>
</feature>
<feature type="transmembrane region" description="Helical" evidence="1">
    <location>
        <begin position="68"/>
        <end position="88"/>
    </location>
</feature>
<feature type="topological domain" description="Cytoplasmic" evidence="1">
    <location>
        <begin position="89"/>
        <end position="93"/>
    </location>
</feature>
<feature type="transmembrane region" description="Helical" evidence="1">
    <location>
        <begin position="94"/>
        <end position="114"/>
    </location>
</feature>
<feature type="topological domain" description="Extracellular" evidence="1">
    <location>
        <begin position="115"/>
        <end position="125"/>
    </location>
</feature>
<feature type="transmembrane region" description="Helical" evidence="1">
    <location>
        <begin position="126"/>
        <end position="146"/>
    </location>
</feature>
<feature type="topological domain" description="Cytoplasmic" evidence="1">
    <location>
        <begin position="147"/>
        <end position="163"/>
    </location>
</feature>
<feature type="transmembrane region" description="Helical" evidence="1">
    <location>
        <begin position="164"/>
        <end position="184"/>
    </location>
</feature>
<feature type="topological domain" description="Extracellular" evidence="1">
    <location>
        <begin position="185"/>
        <end position="215"/>
    </location>
</feature>
<feature type="transmembrane region" description="Helical" evidence="1">
    <location>
        <begin position="216"/>
        <end position="236"/>
    </location>
</feature>
<feature type="topological domain" description="Cytoplasmic" evidence="1">
    <location>
        <begin position="237"/>
        <end position="244"/>
    </location>
</feature>
<feature type="transmembrane region" description="Helical" evidence="1">
    <location>
        <begin position="245"/>
        <end position="265"/>
    </location>
</feature>
<feature type="topological domain" description="Extracellular" evidence="1">
    <location>
        <begin position="266"/>
        <end position="270"/>
    </location>
</feature>
<feature type="transmembrane region" description="Helical" evidence="1">
    <location>
        <begin position="271"/>
        <end position="291"/>
    </location>
</feature>
<feature type="topological domain" description="Cytoplasmic" evidence="1">
    <location>
        <begin position="292"/>
        <end position="303"/>
    </location>
</feature>
<feature type="active site" evidence="1">
    <location>
        <position position="60"/>
    </location>
</feature>
<feature type="binding site" description="axial binding residue" evidence="1">
    <location>
        <position position="63"/>
    </location>
    <ligand>
        <name>heme o</name>
        <dbReference type="ChEBI" id="CHEBI:24480"/>
    </ligand>
    <ligandPart>
        <name>Fe</name>
        <dbReference type="ChEBI" id="CHEBI:18248"/>
    </ligandPart>
</feature>
<feature type="binding site" description="axial binding residue" evidence="1">
    <location>
        <position position="125"/>
    </location>
    <ligand>
        <name>heme o</name>
        <dbReference type="ChEBI" id="CHEBI:24480"/>
    </ligand>
    <ligandPart>
        <name>Fe</name>
        <dbReference type="ChEBI" id="CHEBI:18248"/>
    </ligandPart>
</feature>
<feature type="binding site" description="axial binding residue" evidence="1">
    <location>
        <position position="214"/>
    </location>
    <ligand>
        <name>heme b</name>
        <dbReference type="ChEBI" id="CHEBI:60344"/>
    </ligand>
    <ligandPart>
        <name>Fe</name>
        <dbReference type="ChEBI" id="CHEBI:18248"/>
    </ligandPart>
</feature>
<feature type="binding site" description="axial binding residue" evidence="1">
    <location>
        <position position="276"/>
    </location>
    <ligand>
        <name>heme b</name>
        <dbReference type="ChEBI" id="CHEBI:60344"/>
    </ligand>
    <ligandPart>
        <name>Fe</name>
        <dbReference type="ChEBI" id="CHEBI:18248"/>
    </ligandPart>
</feature>
<feature type="disulfide bond" description="Essential for catalytic activity" evidence="1">
    <location>
        <begin position="37"/>
        <end position="44"/>
    </location>
</feature>
<keyword id="KW-1003">Cell membrane</keyword>
<keyword id="KW-1015">Disulfide bond</keyword>
<keyword id="KW-0350">Heme biosynthesis</keyword>
<keyword id="KW-0408">Iron</keyword>
<keyword id="KW-0472">Membrane</keyword>
<keyword id="KW-0479">Metal-binding</keyword>
<keyword id="KW-0560">Oxidoreductase</keyword>
<keyword id="KW-0812">Transmembrane</keyword>
<keyword id="KW-1133">Transmembrane helix</keyword>
<evidence type="ECO:0000255" key="1">
    <source>
        <dbReference type="HAMAP-Rule" id="MF_01664"/>
    </source>
</evidence>
<evidence type="ECO:0000305" key="2"/>
<accession>Q5HGW9</accession>
<sequence>MFGKKNLKWLGVVATLMMTFVQLGGALVTKTGSADGCGSSWPLCHGALIPEFFPIDTIIELSHRAVSALSLLMVLWLVITAWKHIGYIKEIKPLSIISVGFLLLQALIGAAAVIWQQNDYVLALHFGISLISFSSVFLITLIIFSIDQKYEADELYIKKPLRRLTWLMAIIIYCGVYTGALVRHADASLAYGGWPLPFHDLVPHSEQDWVQLTHRIMAFIVFTIIMITYIHAVKNYPNNRTVHYGYTAAFILVILQVITGALSIMTNVNLIIALFHALFITYLFGMTTYFIMLMLRSVRSDKQ</sequence>
<protein>
    <recommendedName>
        <fullName evidence="1">Heme A synthase</fullName>
        <shortName evidence="1">HAS</shortName>
        <ecNumber evidence="1">1.17.99.9</ecNumber>
    </recommendedName>
    <alternativeName>
        <fullName evidence="1">Cytochrome aa3-controlling protein</fullName>
    </alternativeName>
</protein>
<comment type="function">
    <text evidence="1">Catalyzes the conversion of heme O to heme A by two successive hydroxylations of the methyl group at C8. The first hydroxylation forms heme I, the second hydroxylation results in an unstable dihydroxymethyl group, which spontaneously dehydrates, resulting in the formyl group of heme A.</text>
</comment>
<comment type="catalytic activity">
    <reaction evidence="1">
        <text>Fe(II)-heme o + 2 A + H2O = Fe(II)-heme a + 2 AH2</text>
        <dbReference type="Rhea" id="RHEA:63388"/>
        <dbReference type="ChEBI" id="CHEBI:13193"/>
        <dbReference type="ChEBI" id="CHEBI:15377"/>
        <dbReference type="ChEBI" id="CHEBI:17499"/>
        <dbReference type="ChEBI" id="CHEBI:60530"/>
        <dbReference type="ChEBI" id="CHEBI:61715"/>
        <dbReference type="EC" id="1.17.99.9"/>
    </reaction>
    <physiologicalReaction direction="left-to-right" evidence="1">
        <dbReference type="Rhea" id="RHEA:63389"/>
    </physiologicalReaction>
</comment>
<comment type="cofactor">
    <cofactor evidence="1">
        <name>heme b</name>
        <dbReference type="ChEBI" id="CHEBI:60344"/>
    </cofactor>
</comment>
<comment type="pathway">
    <text evidence="1">Porphyrin-containing compound metabolism; heme A biosynthesis; heme A from heme O: step 1/1.</text>
</comment>
<comment type="subunit">
    <text evidence="1">Interacts with CtaB.</text>
</comment>
<comment type="subcellular location">
    <subcellularLocation>
        <location evidence="1">Cell membrane</location>
        <topology evidence="1">Multi-pass membrane protein</topology>
    </subcellularLocation>
</comment>
<comment type="domain">
    <text evidence="1">The N-half (TM1-TM4) and C-half (TM5-TM8) domains are connected by an intracellular loop. Each domain is formed from four-helix bundles and they align in a pseudo twofold symmetry manner. The N-half domain is the substrate-heme O binding domain and the C-half domain is the cofactor heme B binding domain.</text>
</comment>
<comment type="domain">
    <text evidence="1">The cysteines of disulfide bond Cys-37 and Cys-44 may be involved in transfer of reducing equivalents from quinol in the membrane to the active site of the enzyme.</text>
</comment>
<comment type="similarity">
    <text evidence="1">Belongs to the COX15/CtaA family. Type 1 subfamily.</text>
</comment>
<comment type="sequence caution" evidence="2">
    <conflict type="erroneous initiation">
        <sequence resource="EMBL-CDS" id="AAW38004"/>
    </conflict>
</comment>
<proteinExistence type="inferred from homology"/>
<name>CTAA_STAAC</name>
<organism>
    <name type="scientific">Staphylococcus aureus (strain COL)</name>
    <dbReference type="NCBI Taxonomy" id="93062"/>
    <lineage>
        <taxon>Bacteria</taxon>
        <taxon>Bacillati</taxon>
        <taxon>Bacillota</taxon>
        <taxon>Bacilli</taxon>
        <taxon>Bacillales</taxon>
        <taxon>Staphylococcaceae</taxon>
        <taxon>Staphylococcus</taxon>
    </lineage>
</organism>
<dbReference type="EC" id="1.17.99.9" evidence="1"/>
<dbReference type="EMBL" id="CP000046">
    <property type="protein sequence ID" value="AAW38004.1"/>
    <property type="status" value="ALT_INIT"/>
    <property type="molecule type" value="Genomic_DNA"/>
</dbReference>
<dbReference type="RefSeq" id="WP_000467123.1">
    <property type="nucleotide sequence ID" value="NZ_JBGOFO010000002.1"/>
</dbReference>
<dbReference type="SMR" id="Q5HGW9"/>
<dbReference type="KEGG" id="sac:SACOL1124"/>
<dbReference type="HOGENOM" id="CLU_041525_3_1_9"/>
<dbReference type="UniPathway" id="UPA00269">
    <property type="reaction ID" value="UER00713"/>
</dbReference>
<dbReference type="Proteomes" id="UP000000530">
    <property type="component" value="Chromosome"/>
</dbReference>
<dbReference type="GO" id="GO:0005886">
    <property type="term" value="C:plasma membrane"/>
    <property type="evidence" value="ECO:0007669"/>
    <property type="project" value="UniProtKB-SubCell"/>
</dbReference>
<dbReference type="GO" id="GO:0046872">
    <property type="term" value="F:metal ion binding"/>
    <property type="evidence" value="ECO:0007669"/>
    <property type="project" value="UniProtKB-KW"/>
</dbReference>
<dbReference type="GO" id="GO:0016653">
    <property type="term" value="F:oxidoreductase activity, acting on NAD(P)H, heme protein as acceptor"/>
    <property type="evidence" value="ECO:0007669"/>
    <property type="project" value="InterPro"/>
</dbReference>
<dbReference type="GO" id="GO:0006784">
    <property type="term" value="P:heme A biosynthetic process"/>
    <property type="evidence" value="ECO:0007669"/>
    <property type="project" value="UniProtKB-UniRule"/>
</dbReference>
<dbReference type="HAMAP" id="MF_01664">
    <property type="entry name" value="HemeA_synth_type1"/>
    <property type="match status" value="1"/>
</dbReference>
<dbReference type="InterPro" id="IPR003780">
    <property type="entry name" value="COX15/CtaA_fam"/>
</dbReference>
<dbReference type="InterPro" id="IPR050450">
    <property type="entry name" value="COX15/CtaA_HemeA_synthase"/>
</dbReference>
<dbReference type="InterPro" id="IPR023755">
    <property type="entry name" value="HemeA_Synthase_type1"/>
</dbReference>
<dbReference type="PANTHER" id="PTHR35457">
    <property type="entry name" value="HEME A SYNTHASE"/>
    <property type="match status" value="1"/>
</dbReference>
<dbReference type="PANTHER" id="PTHR35457:SF1">
    <property type="entry name" value="HEME A SYNTHASE"/>
    <property type="match status" value="1"/>
</dbReference>
<dbReference type="Pfam" id="PF02628">
    <property type="entry name" value="COX15-CtaA"/>
    <property type="match status" value="1"/>
</dbReference>